<accession>A6TBX4</accession>
<evidence type="ECO:0000255" key="1">
    <source>
        <dbReference type="HAMAP-Rule" id="MF_01394"/>
    </source>
</evidence>
<evidence type="ECO:0000305" key="2"/>
<organism>
    <name type="scientific">Klebsiella pneumoniae subsp. pneumoniae (strain ATCC 700721 / MGH 78578)</name>
    <dbReference type="NCBI Taxonomy" id="272620"/>
    <lineage>
        <taxon>Bacteria</taxon>
        <taxon>Pseudomonadati</taxon>
        <taxon>Pseudomonadota</taxon>
        <taxon>Gammaproteobacteria</taxon>
        <taxon>Enterobacterales</taxon>
        <taxon>Enterobacteriaceae</taxon>
        <taxon>Klebsiella/Raoultella group</taxon>
        <taxon>Klebsiella</taxon>
        <taxon>Klebsiella pneumoniae complex</taxon>
    </lineage>
</organism>
<reference key="1">
    <citation type="submission" date="2006-09" db="EMBL/GenBank/DDBJ databases">
        <authorList>
            <consortium name="The Klebsiella pneumonia Genome Sequencing Project"/>
            <person name="McClelland M."/>
            <person name="Sanderson E.K."/>
            <person name="Spieth J."/>
            <person name="Clifton W.S."/>
            <person name="Latreille P."/>
            <person name="Sabo A."/>
            <person name="Pepin K."/>
            <person name="Bhonagiri V."/>
            <person name="Porwollik S."/>
            <person name="Ali J."/>
            <person name="Wilson R.K."/>
        </authorList>
    </citation>
    <scope>NUCLEOTIDE SEQUENCE [LARGE SCALE GENOMIC DNA]</scope>
    <source>
        <strain>ATCC 700721 / MGH 78578</strain>
    </source>
</reference>
<feature type="chain" id="PRO_0000362700" description="NADH-quinone oxidoreductase subunit A">
    <location>
        <begin position="1"/>
        <end position="148"/>
    </location>
</feature>
<feature type="transmembrane region" description="Helical" evidence="1">
    <location>
        <begin position="14"/>
        <end position="34"/>
    </location>
</feature>
<feature type="transmembrane region" description="Helical" evidence="1">
    <location>
        <begin position="68"/>
        <end position="88"/>
    </location>
</feature>
<feature type="transmembrane region" description="Helical" evidence="1">
    <location>
        <begin position="98"/>
        <end position="118"/>
    </location>
</feature>
<comment type="function">
    <text evidence="1">NDH-1 shuttles electrons from NADH, via FMN and iron-sulfur (Fe-S) centers, to quinones in the respiratory chain. The immediate electron acceptor for the enzyme in this species is believed to be ubiquinone. Couples the redox reaction to proton translocation (for every two electrons transferred, four hydrogen ions are translocated across the cytoplasmic membrane), and thus conserves the redox energy in a proton gradient.</text>
</comment>
<comment type="catalytic activity">
    <reaction evidence="1">
        <text>a quinone + NADH + 5 H(+)(in) = a quinol + NAD(+) + 4 H(+)(out)</text>
        <dbReference type="Rhea" id="RHEA:57888"/>
        <dbReference type="ChEBI" id="CHEBI:15378"/>
        <dbReference type="ChEBI" id="CHEBI:24646"/>
        <dbReference type="ChEBI" id="CHEBI:57540"/>
        <dbReference type="ChEBI" id="CHEBI:57945"/>
        <dbReference type="ChEBI" id="CHEBI:132124"/>
    </reaction>
</comment>
<comment type="subunit">
    <text evidence="1">NDH-1 is composed of 13 different subunits. Subunits NuoA, H, J, K, L, M, N constitute the membrane sector of the complex.</text>
</comment>
<comment type="subcellular location">
    <subcellularLocation>
        <location evidence="1">Cell inner membrane</location>
        <topology evidence="1">Multi-pass membrane protein</topology>
    </subcellularLocation>
</comment>
<comment type="similarity">
    <text evidence="1">Belongs to the complex I subunit 3 family.</text>
</comment>
<comment type="sequence caution" evidence="2">
    <conflict type="erroneous initiation">
        <sequence resource="EMBL-CDS" id="ABR78095"/>
    </conflict>
</comment>
<keyword id="KW-0997">Cell inner membrane</keyword>
<keyword id="KW-1003">Cell membrane</keyword>
<keyword id="KW-0472">Membrane</keyword>
<keyword id="KW-0520">NAD</keyword>
<keyword id="KW-0874">Quinone</keyword>
<keyword id="KW-1278">Translocase</keyword>
<keyword id="KW-0812">Transmembrane</keyword>
<keyword id="KW-1133">Transmembrane helix</keyword>
<keyword id="KW-0813">Transport</keyword>
<keyword id="KW-0830">Ubiquinone</keyword>
<sequence>MRMSTSTEVIAHHWAFAIFLIIAIGLCCLMLVGGWYLGGRARARSKNTPFESGIDSVGSARLRLSAKFYLVAMFFVIFDVEALYLYAWSTSIRESGWVGFVEAAIFILVLLAGLVYLVRIGALDWTPARSRRTLVNPETDSPTNRHMQ</sequence>
<name>NUOA_KLEP7</name>
<proteinExistence type="inferred from homology"/>
<gene>
    <name evidence="1" type="primary">nuoA</name>
    <name type="ordered locus">KPN78578_26340</name>
    <name type="ORF">KPN_02678</name>
</gene>
<dbReference type="EC" id="7.1.1.-" evidence="1"/>
<dbReference type="EMBL" id="CP000647">
    <property type="protein sequence ID" value="ABR78095.1"/>
    <property type="status" value="ALT_INIT"/>
    <property type="molecule type" value="Genomic_DNA"/>
</dbReference>
<dbReference type="RefSeq" id="WP_002913181.1">
    <property type="nucleotide sequence ID" value="NC_009648.1"/>
</dbReference>
<dbReference type="SMR" id="A6TBX4"/>
<dbReference type="STRING" id="272620.KPN_02678"/>
<dbReference type="jPOST" id="A6TBX4"/>
<dbReference type="PaxDb" id="272620-KPN_02678"/>
<dbReference type="EnsemblBacteria" id="ABR78095">
    <property type="protein sequence ID" value="ABR78095"/>
    <property type="gene ID" value="KPN_02678"/>
</dbReference>
<dbReference type="GeneID" id="93313051"/>
<dbReference type="KEGG" id="kpn:KPN_02678"/>
<dbReference type="HOGENOM" id="CLU_119549_2_0_6"/>
<dbReference type="Proteomes" id="UP000000265">
    <property type="component" value="Chromosome"/>
</dbReference>
<dbReference type="GO" id="GO:0030964">
    <property type="term" value="C:NADH dehydrogenase complex"/>
    <property type="evidence" value="ECO:0007669"/>
    <property type="project" value="TreeGrafter"/>
</dbReference>
<dbReference type="GO" id="GO:0005886">
    <property type="term" value="C:plasma membrane"/>
    <property type="evidence" value="ECO:0007669"/>
    <property type="project" value="UniProtKB-SubCell"/>
</dbReference>
<dbReference type="GO" id="GO:0008137">
    <property type="term" value="F:NADH dehydrogenase (ubiquinone) activity"/>
    <property type="evidence" value="ECO:0007669"/>
    <property type="project" value="InterPro"/>
</dbReference>
<dbReference type="GO" id="GO:0050136">
    <property type="term" value="F:NADH:ubiquinone reductase (non-electrogenic) activity"/>
    <property type="evidence" value="ECO:0007669"/>
    <property type="project" value="UniProtKB-UniRule"/>
</dbReference>
<dbReference type="GO" id="GO:0048038">
    <property type="term" value="F:quinone binding"/>
    <property type="evidence" value="ECO:0007669"/>
    <property type="project" value="UniProtKB-KW"/>
</dbReference>
<dbReference type="FunFam" id="1.20.58.1610:FF:000003">
    <property type="entry name" value="NADH-quinone oxidoreductase subunit A"/>
    <property type="match status" value="1"/>
</dbReference>
<dbReference type="Gene3D" id="1.20.58.1610">
    <property type="entry name" value="NADH:ubiquinone/plastoquinone oxidoreductase, chain 3"/>
    <property type="match status" value="1"/>
</dbReference>
<dbReference type="HAMAP" id="MF_01394">
    <property type="entry name" value="NDH1_NuoA"/>
    <property type="match status" value="1"/>
</dbReference>
<dbReference type="InterPro" id="IPR023043">
    <property type="entry name" value="NAD(P)H_OxRDtase_bac/plastid"/>
</dbReference>
<dbReference type="InterPro" id="IPR000440">
    <property type="entry name" value="NADH_UbQ/plastoQ_OxRdtase_su3"/>
</dbReference>
<dbReference type="InterPro" id="IPR038430">
    <property type="entry name" value="NDAH_ubi_oxred_su3_sf"/>
</dbReference>
<dbReference type="PANTHER" id="PTHR11058:SF21">
    <property type="entry name" value="NADH-QUINONE OXIDOREDUCTASE SUBUNIT A"/>
    <property type="match status" value="1"/>
</dbReference>
<dbReference type="PANTHER" id="PTHR11058">
    <property type="entry name" value="NADH-UBIQUINONE OXIDOREDUCTASE CHAIN 3"/>
    <property type="match status" value="1"/>
</dbReference>
<dbReference type="Pfam" id="PF00507">
    <property type="entry name" value="Oxidored_q4"/>
    <property type="match status" value="1"/>
</dbReference>
<protein>
    <recommendedName>
        <fullName evidence="1">NADH-quinone oxidoreductase subunit A</fullName>
        <ecNumber evidence="1">7.1.1.-</ecNumber>
    </recommendedName>
    <alternativeName>
        <fullName evidence="1">NADH dehydrogenase I subunit A</fullName>
    </alternativeName>
    <alternativeName>
        <fullName evidence="1">NDH-1 subunit A</fullName>
    </alternativeName>
    <alternativeName>
        <fullName evidence="1">NUO1</fullName>
    </alternativeName>
</protein>